<comment type="catalytic activity">
    <reaction evidence="1">
        <text>1-(5-phospho-beta-D-ribosyl)-5-[(5-phospho-beta-D-ribosylamino)methylideneamino]imidazole-4-carboxamide = 5-[(5-phospho-1-deoxy-D-ribulos-1-ylimino)methylamino]-1-(5-phospho-beta-D-ribosyl)imidazole-4-carboxamide</text>
        <dbReference type="Rhea" id="RHEA:15469"/>
        <dbReference type="ChEBI" id="CHEBI:58435"/>
        <dbReference type="ChEBI" id="CHEBI:58525"/>
        <dbReference type="EC" id="5.3.1.16"/>
    </reaction>
</comment>
<comment type="pathway">
    <text evidence="1">Amino-acid biosynthesis; L-histidine biosynthesis; L-histidine from 5-phospho-alpha-D-ribose 1-diphosphate: step 4/9.</text>
</comment>
<comment type="subcellular location">
    <subcellularLocation>
        <location evidence="1">Cytoplasm</location>
    </subcellularLocation>
</comment>
<comment type="similarity">
    <text evidence="1">Belongs to the HisA/HisF family.</text>
</comment>
<evidence type="ECO:0000255" key="1">
    <source>
        <dbReference type="HAMAP-Rule" id="MF_01014"/>
    </source>
</evidence>
<reference key="1">
    <citation type="journal article" date="2006" name="Proc. Natl. Acad. Sci. U.S.A.">
        <title>Comparative genomics of the lactic acid bacteria.</title>
        <authorList>
            <person name="Makarova K.S."/>
            <person name="Slesarev A."/>
            <person name="Wolf Y.I."/>
            <person name="Sorokin A."/>
            <person name="Mirkin B."/>
            <person name="Koonin E.V."/>
            <person name="Pavlov A."/>
            <person name="Pavlova N."/>
            <person name="Karamychev V."/>
            <person name="Polouchine N."/>
            <person name="Shakhova V."/>
            <person name="Grigoriev I."/>
            <person name="Lou Y."/>
            <person name="Rohksar D."/>
            <person name="Lucas S."/>
            <person name="Huang K."/>
            <person name="Goodstein D.M."/>
            <person name="Hawkins T."/>
            <person name="Plengvidhya V."/>
            <person name="Welker D."/>
            <person name="Hughes J."/>
            <person name="Goh Y."/>
            <person name="Benson A."/>
            <person name="Baldwin K."/>
            <person name="Lee J.-H."/>
            <person name="Diaz-Muniz I."/>
            <person name="Dosti B."/>
            <person name="Smeianov V."/>
            <person name="Wechter W."/>
            <person name="Barabote R."/>
            <person name="Lorca G."/>
            <person name="Altermann E."/>
            <person name="Barrangou R."/>
            <person name="Ganesan B."/>
            <person name="Xie Y."/>
            <person name="Rawsthorne H."/>
            <person name="Tamir D."/>
            <person name="Parker C."/>
            <person name="Breidt F."/>
            <person name="Broadbent J.R."/>
            <person name="Hutkins R."/>
            <person name="O'Sullivan D."/>
            <person name="Steele J."/>
            <person name="Unlu G."/>
            <person name="Saier M.H. Jr."/>
            <person name="Klaenhammer T."/>
            <person name="Richardson P."/>
            <person name="Kozyavkin S."/>
            <person name="Weimer B.C."/>
            <person name="Mills D.A."/>
        </authorList>
    </citation>
    <scope>NUCLEOTIDE SEQUENCE [LARGE SCALE GENOMIC DNA]</scope>
    <source>
        <strain>ATCC 334 / BCRC 17002 / CCUG 31169 / CIP 107868 / KCTC 3260 / NRRL B-441</strain>
    </source>
</reference>
<feature type="chain" id="PRO_0000290483" description="1-(5-phosphoribosyl)-5-[(5-phosphoribosylamino)methylideneamino] imidazole-4-carboxamide isomerase">
    <location>
        <begin position="1"/>
        <end position="238"/>
    </location>
</feature>
<feature type="active site" description="Proton acceptor" evidence="1">
    <location>
        <position position="8"/>
    </location>
</feature>
<feature type="active site" description="Proton donor" evidence="1">
    <location>
        <position position="129"/>
    </location>
</feature>
<keyword id="KW-0028">Amino-acid biosynthesis</keyword>
<keyword id="KW-0963">Cytoplasm</keyword>
<keyword id="KW-0368">Histidine biosynthesis</keyword>
<keyword id="KW-0413">Isomerase</keyword>
<keyword id="KW-1185">Reference proteome</keyword>
<protein>
    <recommendedName>
        <fullName evidence="1">1-(5-phosphoribosyl)-5-[(5-phosphoribosylamino)methylideneamino] imidazole-4-carboxamide isomerase</fullName>
        <ecNumber evidence="1">5.3.1.16</ecNumber>
    </recommendedName>
    <alternativeName>
        <fullName evidence="1">Phosphoribosylformimino-5-aminoimidazole carboxamide ribotide isomerase</fullName>
    </alternativeName>
</protein>
<accession>Q039B4</accession>
<name>HIS4_LACP3</name>
<gene>
    <name evidence="1" type="primary">hisA</name>
    <name type="ordered locus">LSEI_1430</name>
</gene>
<organism>
    <name type="scientific">Lacticaseibacillus paracasei (strain ATCC 334 / BCRC 17002 / CCUG 31169 / CIP 107868 / KCTC 3260 / NRRL B-441)</name>
    <name type="common">Lactobacillus paracasei</name>
    <dbReference type="NCBI Taxonomy" id="321967"/>
    <lineage>
        <taxon>Bacteria</taxon>
        <taxon>Bacillati</taxon>
        <taxon>Bacillota</taxon>
        <taxon>Bacilli</taxon>
        <taxon>Lactobacillales</taxon>
        <taxon>Lactobacillaceae</taxon>
        <taxon>Lacticaseibacillus</taxon>
    </lineage>
</organism>
<sequence length="238" mass="25493">MKLYPAIDLLNGKSVRLTQGDYDQVSLTEDPLYQAQRLTDAGFAHLHLVDLDGARAQRPINRTVITRIREQTSAFIELGGGIRTLAAMEIYLTIGIDRLILGSAAVSDPDLVEQAIARFGSNRIAVGIDTRAGKVATNGWLTTSQQTANALLTAMQQRGVTTFIVTDIAKDGMMQGPNAQLLADLQQAMPQATIIASGGISLLADLHRLQTAGIQAAIIGKAWQTGAIELAMLKQMEG</sequence>
<dbReference type="EC" id="5.3.1.16" evidence="1"/>
<dbReference type="EMBL" id="CP000423">
    <property type="protein sequence ID" value="ABJ70208.1"/>
    <property type="molecule type" value="Genomic_DNA"/>
</dbReference>
<dbReference type="RefSeq" id="WP_011674504.1">
    <property type="nucleotide sequence ID" value="NC_008526.1"/>
</dbReference>
<dbReference type="RefSeq" id="YP_806650.1">
    <property type="nucleotide sequence ID" value="NC_008526.1"/>
</dbReference>
<dbReference type="SMR" id="Q039B4"/>
<dbReference type="STRING" id="321967.LSEI_1430"/>
<dbReference type="PaxDb" id="321967-LSEI_1430"/>
<dbReference type="KEGG" id="lca:LSEI_1430"/>
<dbReference type="PATRIC" id="fig|321967.11.peg.1410"/>
<dbReference type="HOGENOM" id="CLU_048577_1_2_9"/>
<dbReference type="UniPathway" id="UPA00031">
    <property type="reaction ID" value="UER00009"/>
</dbReference>
<dbReference type="Proteomes" id="UP000001651">
    <property type="component" value="Chromosome"/>
</dbReference>
<dbReference type="GO" id="GO:0005737">
    <property type="term" value="C:cytoplasm"/>
    <property type="evidence" value="ECO:0007669"/>
    <property type="project" value="UniProtKB-SubCell"/>
</dbReference>
<dbReference type="GO" id="GO:0003949">
    <property type="term" value="F:1-(5-phosphoribosyl)-5-[(5-phosphoribosylamino)methylideneamino]imidazole-4-carboxamide isomerase activity"/>
    <property type="evidence" value="ECO:0007669"/>
    <property type="project" value="UniProtKB-UniRule"/>
</dbReference>
<dbReference type="GO" id="GO:0000105">
    <property type="term" value="P:L-histidine biosynthetic process"/>
    <property type="evidence" value="ECO:0007669"/>
    <property type="project" value="UniProtKB-UniRule"/>
</dbReference>
<dbReference type="GO" id="GO:0000162">
    <property type="term" value="P:L-tryptophan biosynthetic process"/>
    <property type="evidence" value="ECO:0007669"/>
    <property type="project" value="TreeGrafter"/>
</dbReference>
<dbReference type="CDD" id="cd04732">
    <property type="entry name" value="HisA"/>
    <property type="match status" value="1"/>
</dbReference>
<dbReference type="FunFam" id="3.20.20.70:FF:000009">
    <property type="entry name" value="1-(5-phosphoribosyl)-5-[(5-phosphoribosylamino)methylideneamino] imidazole-4-carboxamide isomerase"/>
    <property type="match status" value="1"/>
</dbReference>
<dbReference type="Gene3D" id="3.20.20.70">
    <property type="entry name" value="Aldolase class I"/>
    <property type="match status" value="1"/>
</dbReference>
<dbReference type="HAMAP" id="MF_01014">
    <property type="entry name" value="HisA"/>
    <property type="match status" value="1"/>
</dbReference>
<dbReference type="InterPro" id="IPR013785">
    <property type="entry name" value="Aldolase_TIM"/>
</dbReference>
<dbReference type="InterPro" id="IPR006062">
    <property type="entry name" value="His_biosynth"/>
</dbReference>
<dbReference type="InterPro" id="IPR006063">
    <property type="entry name" value="HisA_bact_arch"/>
</dbReference>
<dbReference type="InterPro" id="IPR044524">
    <property type="entry name" value="Isoase_HisA-like"/>
</dbReference>
<dbReference type="InterPro" id="IPR023016">
    <property type="entry name" value="Isoase_HisA-like_bact"/>
</dbReference>
<dbReference type="InterPro" id="IPR011060">
    <property type="entry name" value="RibuloseP-bd_barrel"/>
</dbReference>
<dbReference type="NCBIfam" id="TIGR00007">
    <property type="entry name" value="1-(5-phosphoribosyl)-5-[(5-phosphoribosylamino)methylideneamino]imidazole-4-carboxamide isomerase"/>
    <property type="match status" value="1"/>
</dbReference>
<dbReference type="PANTHER" id="PTHR43090">
    <property type="entry name" value="1-(5-PHOSPHORIBOSYL)-5-[(5-PHOSPHORIBOSYLAMINO)METHYLIDENEAMINO] IMIDAZOLE-4-CARBOXAMIDE ISOMERASE"/>
    <property type="match status" value="1"/>
</dbReference>
<dbReference type="PANTHER" id="PTHR43090:SF2">
    <property type="entry name" value="1-(5-PHOSPHORIBOSYL)-5-[(5-PHOSPHORIBOSYLAMINO)METHYLIDENEAMINO] IMIDAZOLE-4-CARBOXAMIDE ISOMERASE"/>
    <property type="match status" value="1"/>
</dbReference>
<dbReference type="Pfam" id="PF00977">
    <property type="entry name" value="His_biosynth"/>
    <property type="match status" value="1"/>
</dbReference>
<dbReference type="SUPFAM" id="SSF51366">
    <property type="entry name" value="Ribulose-phoshate binding barrel"/>
    <property type="match status" value="1"/>
</dbReference>
<proteinExistence type="inferred from homology"/>